<gene>
    <name evidence="1" type="primary">rplY</name>
    <name type="ordered locus">YPTS_1391</name>
</gene>
<evidence type="ECO:0000255" key="1">
    <source>
        <dbReference type="HAMAP-Rule" id="MF_01336"/>
    </source>
</evidence>
<evidence type="ECO:0000305" key="2"/>
<keyword id="KW-0687">Ribonucleoprotein</keyword>
<keyword id="KW-0689">Ribosomal protein</keyword>
<keyword id="KW-0694">RNA-binding</keyword>
<keyword id="KW-0699">rRNA-binding</keyword>
<comment type="function">
    <text evidence="1">This is one of the proteins that binds to the 5S RNA in the ribosome where it forms part of the central protuberance.</text>
</comment>
<comment type="subunit">
    <text evidence="1">Part of the 50S ribosomal subunit; part of the 5S rRNA/L5/L18/L25 subcomplex. Contacts the 5S rRNA. Binds to the 5S rRNA independently of L5 and L18.</text>
</comment>
<comment type="similarity">
    <text evidence="1">Belongs to the bacterial ribosomal protein bL25 family.</text>
</comment>
<feature type="chain" id="PRO_1000142601" description="Large ribosomal subunit protein bL25">
    <location>
        <begin position="1"/>
        <end position="94"/>
    </location>
</feature>
<proteinExistence type="inferred from homology"/>
<sequence length="94" mass="10406">MTTINVEVRNDQGKGASRRLRAANKFPAIVYGGSEAAISIALDHDTTKNLELKPGFYDSVLTLVIDGKETKVKVQAVQRHAFKPKLTHIDFVRV</sequence>
<organism>
    <name type="scientific">Yersinia pseudotuberculosis serotype IB (strain PB1/+)</name>
    <dbReference type="NCBI Taxonomy" id="502801"/>
    <lineage>
        <taxon>Bacteria</taxon>
        <taxon>Pseudomonadati</taxon>
        <taxon>Pseudomonadota</taxon>
        <taxon>Gammaproteobacteria</taxon>
        <taxon>Enterobacterales</taxon>
        <taxon>Yersiniaceae</taxon>
        <taxon>Yersinia</taxon>
    </lineage>
</organism>
<dbReference type="EMBL" id="CP001048">
    <property type="protein sequence ID" value="ACC88365.1"/>
    <property type="molecule type" value="Genomic_DNA"/>
</dbReference>
<dbReference type="RefSeq" id="WP_002208834.1">
    <property type="nucleotide sequence ID" value="NZ_CP009780.1"/>
</dbReference>
<dbReference type="SMR" id="B2K9F2"/>
<dbReference type="GeneID" id="96664865"/>
<dbReference type="KEGG" id="ypb:YPTS_1391"/>
<dbReference type="PATRIC" id="fig|502801.10.peg.744"/>
<dbReference type="GO" id="GO:0022625">
    <property type="term" value="C:cytosolic large ribosomal subunit"/>
    <property type="evidence" value="ECO:0007669"/>
    <property type="project" value="TreeGrafter"/>
</dbReference>
<dbReference type="GO" id="GO:0008097">
    <property type="term" value="F:5S rRNA binding"/>
    <property type="evidence" value="ECO:0007669"/>
    <property type="project" value="InterPro"/>
</dbReference>
<dbReference type="GO" id="GO:0003735">
    <property type="term" value="F:structural constituent of ribosome"/>
    <property type="evidence" value="ECO:0007669"/>
    <property type="project" value="InterPro"/>
</dbReference>
<dbReference type="GO" id="GO:0006412">
    <property type="term" value="P:translation"/>
    <property type="evidence" value="ECO:0007669"/>
    <property type="project" value="UniProtKB-UniRule"/>
</dbReference>
<dbReference type="CDD" id="cd00495">
    <property type="entry name" value="Ribosomal_L25_TL5_CTC"/>
    <property type="match status" value="1"/>
</dbReference>
<dbReference type="FunFam" id="2.40.240.10:FF:000002">
    <property type="entry name" value="50S ribosomal protein L25"/>
    <property type="match status" value="1"/>
</dbReference>
<dbReference type="Gene3D" id="2.40.240.10">
    <property type="entry name" value="Ribosomal Protein L25, Chain P"/>
    <property type="match status" value="1"/>
</dbReference>
<dbReference type="HAMAP" id="MF_01336">
    <property type="entry name" value="Ribosomal_bL25"/>
    <property type="match status" value="1"/>
</dbReference>
<dbReference type="InterPro" id="IPR020056">
    <property type="entry name" value="Rbsml_bL25/Gln-tRNA_synth_N"/>
</dbReference>
<dbReference type="InterPro" id="IPR011035">
    <property type="entry name" value="Ribosomal_bL25/Gln-tRNA_synth"/>
</dbReference>
<dbReference type="InterPro" id="IPR020055">
    <property type="entry name" value="Ribosomal_bL25_short"/>
</dbReference>
<dbReference type="InterPro" id="IPR029751">
    <property type="entry name" value="Ribosomal_L25_dom"/>
</dbReference>
<dbReference type="InterPro" id="IPR020930">
    <property type="entry name" value="Ribosomal_uL5_bac-type"/>
</dbReference>
<dbReference type="NCBIfam" id="NF004612">
    <property type="entry name" value="PRK05943.1"/>
    <property type="match status" value="1"/>
</dbReference>
<dbReference type="PANTHER" id="PTHR33284">
    <property type="entry name" value="RIBOSOMAL PROTEIN L25/GLN-TRNA SYNTHETASE, ANTI-CODON-BINDING DOMAIN-CONTAINING PROTEIN"/>
    <property type="match status" value="1"/>
</dbReference>
<dbReference type="PANTHER" id="PTHR33284:SF1">
    <property type="entry name" value="RIBOSOMAL PROTEIN L25_GLN-TRNA SYNTHETASE, ANTI-CODON-BINDING DOMAIN-CONTAINING PROTEIN"/>
    <property type="match status" value="1"/>
</dbReference>
<dbReference type="Pfam" id="PF01386">
    <property type="entry name" value="Ribosomal_L25p"/>
    <property type="match status" value="1"/>
</dbReference>
<dbReference type="SUPFAM" id="SSF50715">
    <property type="entry name" value="Ribosomal protein L25-like"/>
    <property type="match status" value="1"/>
</dbReference>
<reference key="1">
    <citation type="submission" date="2008-04" db="EMBL/GenBank/DDBJ databases">
        <title>Complete sequence of Yersinia pseudotuberculosis PB1/+.</title>
        <authorList>
            <person name="Copeland A."/>
            <person name="Lucas S."/>
            <person name="Lapidus A."/>
            <person name="Glavina del Rio T."/>
            <person name="Dalin E."/>
            <person name="Tice H."/>
            <person name="Bruce D."/>
            <person name="Goodwin L."/>
            <person name="Pitluck S."/>
            <person name="Munk A.C."/>
            <person name="Brettin T."/>
            <person name="Detter J.C."/>
            <person name="Han C."/>
            <person name="Tapia R."/>
            <person name="Schmutz J."/>
            <person name="Larimer F."/>
            <person name="Land M."/>
            <person name="Hauser L."/>
            <person name="Challacombe J.F."/>
            <person name="Green L."/>
            <person name="Lindler L.E."/>
            <person name="Nikolich M.P."/>
            <person name="Richardson P."/>
        </authorList>
    </citation>
    <scope>NUCLEOTIDE SEQUENCE [LARGE SCALE GENOMIC DNA]</scope>
    <source>
        <strain>PB1/+</strain>
    </source>
</reference>
<protein>
    <recommendedName>
        <fullName evidence="1">Large ribosomal subunit protein bL25</fullName>
    </recommendedName>
    <alternativeName>
        <fullName evidence="2">50S ribosomal protein L25</fullName>
    </alternativeName>
</protein>
<name>RL25_YERPB</name>
<accession>B2K9F2</accession>